<proteinExistence type="inferred from homology"/>
<sequence>MAKDKASRRPRAETPKGFRDYFGADVTERKAMLDAVAEVYHRYGFDPLETSAVETVEALGKFLPDVDRPNEGVFGWQDEDGDWLALRYDLTAPLARVAAQFRNDLPSPYRRYAMGPVWRNEKPGPGRFRQFYQCDADTVGSASVAADAEICAMLSDALEVVGIPRGDYIVRVNNRKVLNGVMEVAGVLDPSDPAKFEAERGIVLRAIDKIDRLGETGVRALLGSGRKDESGDFTKGAGLSDEQAEVVMGFMAARRDTGAATAARLRELVGASTLGCEGVQELETIAELLDVQGYGPDRIVVDPSVVRGLGYYTGPVFEAELTFEILDEKGRKRQFGSVAGGGRYDDLVKRFTGQSVPATGVSIGVDRLLAALRAKGRAGAEAQGPVVVTVMDRDRMGDYMAMVGELRRAGLRAELYLGNPKNFGNQLKYADARKSPVAVIQGSDEAARGVVVLKDLVLGAQIAAGASLEEWKSRPAQVEVPRADLVRAVQDMLS</sequence>
<gene>
    <name evidence="1" type="primary">hisS</name>
    <name type="ordered locus">RHOS4_35840</name>
    <name type="ORF">RSP_3551</name>
</gene>
<keyword id="KW-0030">Aminoacyl-tRNA synthetase</keyword>
<keyword id="KW-0067">ATP-binding</keyword>
<keyword id="KW-0963">Cytoplasm</keyword>
<keyword id="KW-0436">Ligase</keyword>
<keyword id="KW-0547">Nucleotide-binding</keyword>
<keyword id="KW-0648">Protein biosynthesis</keyword>
<keyword id="KW-1185">Reference proteome</keyword>
<organism>
    <name type="scientific">Cereibacter sphaeroides (strain ATCC 17023 / DSM 158 / JCM 6121 / CCUG 31486 / LMG 2827 / NBRC 12203 / NCIMB 8253 / ATH 2.4.1.)</name>
    <name type="common">Rhodobacter sphaeroides</name>
    <dbReference type="NCBI Taxonomy" id="272943"/>
    <lineage>
        <taxon>Bacteria</taxon>
        <taxon>Pseudomonadati</taxon>
        <taxon>Pseudomonadota</taxon>
        <taxon>Alphaproteobacteria</taxon>
        <taxon>Rhodobacterales</taxon>
        <taxon>Paracoccaceae</taxon>
        <taxon>Cereibacter</taxon>
    </lineage>
</organism>
<protein>
    <recommendedName>
        <fullName evidence="1">Histidine--tRNA ligase</fullName>
        <ecNumber evidence="1">6.1.1.21</ecNumber>
    </recommendedName>
    <alternativeName>
        <fullName evidence="1">Histidyl-tRNA synthetase</fullName>
        <shortName evidence="1">HisRS</shortName>
    </alternativeName>
</protein>
<name>SYH_CERS4</name>
<evidence type="ECO:0000255" key="1">
    <source>
        <dbReference type="HAMAP-Rule" id="MF_00127"/>
    </source>
</evidence>
<comment type="catalytic activity">
    <reaction evidence="1">
        <text>tRNA(His) + L-histidine + ATP = L-histidyl-tRNA(His) + AMP + diphosphate + H(+)</text>
        <dbReference type="Rhea" id="RHEA:17313"/>
        <dbReference type="Rhea" id="RHEA-COMP:9665"/>
        <dbReference type="Rhea" id="RHEA-COMP:9689"/>
        <dbReference type="ChEBI" id="CHEBI:15378"/>
        <dbReference type="ChEBI" id="CHEBI:30616"/>
        <dbReference type="ChEBI" id="CHEBI:33019"/>
        <dbReference type="ChEBI" id="CHEBI:57595"/>
        <dbReference type="ChEBI" id="CHEBI:78442"/>
        <dbReference type="ChEBI" id="CHEBI:78527"/>
        <dbReference type="ChEBI" id="CHEBI:456215"/>
        <dbReference type="EC" id="6.1.1.21"/>
    </reaction>
</comment>
<comment type="subunit">
    <text evidence="1">Homodimer.</text>
</comment>
<comment type="subcellular location">
    <subcellularLocation>
        <location evidence="1">Cytoplasm</location>
    </subcellularLocation>
</comment>
<comment type="similarity">
    <text evidence="1">Belongs to the class-II aminoacyl-tRNA synthetase family.</text>
</comment>
<reference key="1">
    <citation type="submission" date="2005-09" db="EMBL/GenBank/DDBJ databases">
        <title>Complete sequence of chromosome 2 of Rhodobacter sphaeroides 2.4.1.</title>
        <authorList>
            <person name="Copeland A."/>
            <person name="Lucas S."/>
            <person name="Lapidus A."/>
            <person name="Barry K."/>
            <person name="Detter J.C."/>
            <person name="Glavina T."/>
            <person name="Hammon N."/>
            <person name="Israni S."/>
            <person name="Pitluck S."/>
            <person name="Richardson P."/>
            <person name="Mackenzie C."/>
            <person name="Choudhary M."/>
            <person name="Larimer F."/>
            <person name="Hauser L.J."/>
            <person name="Land M."/>
            <person name="Donohue T.J."/>
            <person name="Kaplan S."/>
        </authorList>
    </citation>
    <scope>NUCLEOTIDE SEQUENCE [LARGE SCALE GENOMIC DNA]</scope>
    <source>
        <strain>ATCC 17023 / DSM 158 / JCM 6121 / CCUG 31486 / LMG 2827 / NBRC 12203 / NCIMB 8253 / ATH 2.4.1.</strain>
    </source>
</reference>
<feature type="chain" id="PRO_1000016433" description="Histidine--tRNA ligase">
    <location>
        <begin position="1"/>
        <end position="494"/>
    </location>
</feature>
<dbReference type="EC" id="6.1.1.21" evidence="1"/>
<dbReference type="EMBL" id="CP000144">
    <property type="protein sequence ID" value="ABA81152.1"/>
    <property type="molecule type" value="Genomic_DNA"/>
</dbReference>
<dbReference type="RefSeq" id="WP_011339406.1">
    <property type="nucleotide sequence ID" value="NC_007494.2"/>
</dbReference>
<dbReference type="RefSeq" id="YP_355053.1">
    <property type="nucleotide sequence ID" value="NC_007494.2"/>
</dbReference>
<dbReference type="SMR" id="Q3IWD2"/>
<dbReference type="STRING" id="272943.RSP_3551"/>
<dbReference type="EnsemblBacteria" id="ABA81152">
    <property type="protein sequence ID" value="ABA81152"/>
    <property type="gene ID" value="RSP_3551"/>
</dbReference>
<dbReference type="GeneID" id="3721965"/>
<dbReference type="KEGG" id="rsp:RSP_3551"/>
<dbReference type="PATRIC" id="fig|272943.9.peg.3988"/>
<dbReference type="eggNOG" id="COG0124">
    <property type="taxonomic scope" value="Bacteria"/>
</dbReference>
<dbReference type="OrthoDB" id="9800814at2"/>
<dbReference type="PhylomeDB" id="Q3IWD2"/>
<dbReference type="Proteomes" id="UP000002703">
    <property type="component" value="Chromosome 2"/>
</dbReference>
<dbReference type="GO" id="GO:0005737">
    <property type="term" value="C:cytoplasm"/>
    <property type="evidence" value="ECO:0007669"/>
    <property type="project" value="UniProtKB-SubCell"/>
</dbReference>
<dbReference type="GO" id="GO:0005524">
    <property type="term" value="F:ATP binding"/>
    <property type="evidence" value="ECO:0007669"/>
    <property type="project" value="UniProtKB-UniRule"/>
</dbReference>
<dbReference type="GO" id="GO:0004821">
    <property type="term" value="F:histidine-tRNA ligase activity"/>
    <property type="evidence" value="ECO:0007669"/>
    <property type="project" value="UniProtKB-UniRule"/>
</dbReference>
<dbReference type="GO" id="GO:0006427">
    <property type="term" value="P:histidyl-tRNA aminoacylation"/>
    <property type="evidence" value="ECO:0007669"/>
    <property type="project" value="UniProtKB-UniRule"/>
</dbReference>
<dbReference type="CDD" id="cd00773">
    <property type="entry name" value="HisRS-like_core"/>
    <property type="match status" value="1"/>
</dbReference>
<dbReference type="CDD" id="cd00859">
    <property type="entry name" value="HisRS_anticodon"/>
    <property type="match status" value="1"/>
</dbReference>
<dbReference type="Gene3D" id="3.40.50.800">
    <property type="entry name" value="Anticodon-binding domain"/>
    <property type="match status" value="1"/>
</dbReference>
<dbReference type="Gene3D" id="3.30.930.10">
    <property type="entry name" value="Bira Bifunctional Protein, Domain 2"/>
    <property type="match status" value="1"/>
</dbReference>
<dbReference type="HAMAP" id="MF_00127">
    <property type="entry name" value="His_tRNA_synth"/>
    <property type="match status" value="1"/>
</dbReference>
<dbReference type="InterPro" id="IPR006195">
    <property type="entry name" value="aa-tRNA-synth_II"/>
</dbReference>
<dbReference type="InterPro" id="IPR045864">
    <property type="entry name" value="aa-tRNA-synth_II/BPL/LPL"/>
</dbReference>
<dbReference type="InterPro" id="IPR004154">
    <property type="entry name" value="Anticodon-bd"/>
</dbReference>
<dbReference type="InterPro" id="IPR036621">
    <property type="entry name" value="Anticodon-bd_dom_sf"/>
</dbReference>
<dbReference type="InterPro" id="IPR015807">
    <property type="entry name" value="His-tRNA-ligase"/>
</dbReference>
<dbReference type="InterPro" id="IPR041715">
    <property type="entry name" value="HisRS-like_core"/>
</dbReference>
<dbReference type="InterPro" id="IPR004516">
    <property type="entry name" value="HisRS/HisZ"/>
</dbReference>
<dbReference type="InterPro" id="IPR033656">
    <property type="entry name" value="HisRS_anticodon"/>
</dbReference>
<dbReference type="NCBIfam" id="TIGR00442">
    <property type="entry name" value="hisS"/>
    <property type="match status" value="1"/>
</dbReference>
<dbReference type="PANTHER" id="PTHR11476:SF7">
    <property type="entry name" value="HISTIDINE--TRNA LIGASE"/>
    <property type="match status" value="1"/>
</dbReference>
<dbReference type="PANTHER" id="PTHR11476">
    <property type="entry name" value="HISTIDYL-TRNA SYNTHETASE"/>
    <property type="match status" value="1"/>
</dbReference>
<dbReference type="Pfam" id="PF03129">
    <property type="entry name" value="HGTP_anticodon"/>
    <property type="match status" value="1"/>
</dbReference>
<dbReference type="Pfam" id="PF13393">
    <property type="entry name" value="tRNA-synt_His"/>
    <property type="match status" value="1"/>
</dbReference>
<dbReference type="PIRSF" id="PIRSF001549">
    <property type="entry name" value="His-tRNA_synth"/>
    <property type="match status" value="1"/>
</dbReference>
<dbReference type="SUPFAM" id="SSF52954">
    <property type="entry name" value="Class II aaRS ABD-related"/>
    <property type="match status" value="1"/>
</dbReference>
<dbReference type="SUPFAM" id="SSF55681">
    <property type="entry name" value="Class II aaRS and biotin synthetases"/>
    <property type="match status" value="1"/>
</dbReference>
<dbReference type="PROSITE" id="PS50862">
    <property type="entry name" value="AA_TRNA_LIGASE_II"/>
    <property type="match status" value="1"/>
</dbReference>
<accession>Q3IWD2</accession>